<comment type="function">
    <text evidence="1 3">Plays an important role in centriole assembly and/or stability and ciliogenesis. Involved in early steps of centriole duplication, as well as in the later steps of centriole length control.</text>
</comment>
<comment type="subunit">
    <text evidence="3">Interacts with pat.</text>
</comment>
<comment type="subcellular location">
    <subcellularLocation>
        <location evidence="1">Cytoplasm</location>
        <location evidence="1">Cytoskeleton</location>
        <location evidence="1">Microtubule organizing center</location>
        <location evidence="1">Centrosome</location>
        <location evidence="1">Centriole</location>
    </subcellularLocation>
</comment>
<comment type="tissue specificity">
    <text evidence="3">Highly expressed in ovary and, at low levels, in testis.</text>
</comment>
<comment type="developmental stage">
    <text evidence="3">Expressed in eggs and early stage embryos. Strong expression is maintained until stage 8.</text>
</comment>
<comment type="similarity">
    <text evidence="4">Belongs to the WD repeat POC1 family.</text>
</comment>
<proteinExistence type="evidence at protein level"/>
<gene>
    <name type="primary">poc1b</name>
    <name type="synonym">wdr51b</name>
</gene>
<evidence type="ECO:0000250" key="1">
    <source>
        <dbReference type="UniProtKB" id="Q8TC44"/>
    </source>
</evidence>
<evidence type="ECO:0000255" key="2"/>
<evidence type="ECO:0000269" key="3">
    <source>
    </source>
</evidence>
<evidence type="ECO:0000305" key="4"/>
<sequence length="468" mass="52116">MASALDDPALQRHFKGHKDAVTCVDFSPDSKQLASSSADACVMIWNFKPQSRAYKYPGHKEAVTCVQFSPSGHLVASSSKDRTVRLWAPNIKGESTVLKAHTAVVRCVNFSSDGQTFITASDDKSIKAWNLHRQRFLFSLTQHTNWVRCARFSPDGRLIASCSDDKTVRIWDLTNRLCINTFVDYKGHSNYVDFNQMGTCVASAGADSTVKVWDIRMNKLLQHYQVHNAGVSSLSFHPSGNYLLTASSDGTLKILDLLEGRLIYTLHGHQGPVLSVTFSKSGDQFASGATDAQVLVWKTNFDKYSVKEIVKLQQKRTCPEAPPHLNDIYPRTPHLHSSSGHSIEINPMCEVADTQTFDPPIINVGANLPYCRRTKAVHTLNKHVRNDNYPTPPVAFSYTEGQKEHPLVEEQGVLPPSLSNTLEQIVDQLNVLTQTVSILEHRLTLTEDKLKECLENQQKTSAHASESD</sequence>
<feature type="chain" id="PRO_0000420367" description="POC1 centriolar protein homolog B">
    <location>
        <begin position="1"/>
        <end position="468"/>
    </location>
</feature>
<feature type="repeat" description="WD 1">
    <location>
        <begin position="16"/>
        <end position="55"/>
    </location>
</feature>
<feature type="repeat" description="WD 2">
    <location>
        <begin position="58"/>
        <end position="97"/>
    </location>
</feature>
<feature type="repeat" description="WD 3">
    <location>
        <begin position="100"/>
        <end position="139"/>
    </location>
</feature>
<feature type="repeat" description="WD 4">
    <location>
        <begin position="142"/>
        <end position="181"/>
    </location>
</feature>
<feature type="repeat" description="WD 5">
    <location>
        <begin position="184"/>
        <end position="223"/>
    </location>
</feature>
<feature type="repeat" description="WD 6">
    <location>
        <begin position="226"/>
        <end position="265"/>
    </location>
</feature>
<feature type="repeat" description="WD 7">
    <location>
        <begin position="268"/>
        <end position="307"/>
    </location>
</feature>
<feature type="coiled-coil region" evidence="2">
    <location>
        <begin position="420"/>
        <end position="459"/>
    </location>
</feature>
<accession>Q4V7Z1</accession>
<name>POC1B_XENLA</name>
<protein>
    <recommendedName>
        <fullName>POC1 centriolar protein homolog B</fullName>
    </recommendedName>
    <alternativeName>
        <fullName>Pat-interacting protein 1</fullName>
        <shortName>Pix1</shortName>
        <shortName>xPix1</shortName>
    </alternativeName>
    <alternativeName>
        <fullName>WD repeat-containing protein 51B</fullName>
    </alternativeName>
</protein>
<keyword id="KW-0970">Cilium biogenesis/degradation</keyword>
<keyword id="KW-0175">Coiled coil</keyword>
<keyword id="KW-0963">Cytoplasm</keyword>
<keyword id="KW-0206">Cytoskeleton</keyword>
<keyword id="KW-1185">Reference proteome</keyword>
<keyword id="KW-0677">Repeat</keyword>
<keyword id="KW-0853">WD repeat</keyword>
<organism>
    <name type="scientific">Xenopus laevis</name>
    <name type="common">African clawed frog</name>
    <dbReference type="NCBI Taxonomy" id="8355"/>
    <lineage>
        <taxon>Eukaryota</taxon>
        <taxon>Metazoa</taxon>
        <taxon>Chordata</taxon>
        <taxon>Craniata</taxon>
        <taxon>Vertebrata</taxon>
        <taxon>Euteleostomi</taxon>
        <taxon>Amphibia</taxon>
        <taxon>Batrachia</taxon>
        <taxon>Anura</taxon>
        <taxon>Pipoidea</taxon>
        <taxon>Pipidae</taxon>
        <taxon>Xenopodinae</taxon>
        <taxon>Xenopus</taxon>
        <taxon>Xenopus</taxon>
    </lineage>
</organism>
<reference key="1">
    <citation type="journal article" date="2008" name="Exp. Cell Res.">
        <title>Pix1 and Pix2 are novel WD40 microtubule-associated proteins that colocalize with mitochondria in Xenopus germ plasm and centrosomes in human cells.</title>
        <authorList>
            <person name="Hames R.S."/>
            <person name="Hames R."/>
            <person name="Prosser S.L."/>
            <person name="Euteneuer U."/>
            <person name="Lopes C.A."/>
            <person name="Moore W."/>
            <person name="Woodland H.R."/>
            <person name="Fry A.M."/>
        </authorList>
    </citation>
    <scope>NUCLEOTIDE SEQUENCE [MRNA]</scope>
    <scope>INTERACTION WITH PAT</scope>
    <scope>SUBCELLULAR LOCATION</scope>
    <scope>TISSUE SPECIFICITY</scope>
    <scope>DEVELOPMENTAL STAGE</scope>
</reference>
<reference key="2">
    <citation type="submission" date="2005-06" db="EMBL/GenBank/DDBJ databases">
        <authorList>
            <consortium name="NIH - Xenopus Gene Collection (XGC) project"/>
        </authorList>
    </citation>
    <scope>NUCLEOTIDE SEQUENCE [LARGE SCALE MRNA]</scope>
    <source>
        <tissue>Ovary</tissue>
    </source>
</reference>
<dbReference type="EMBL" id="BC097649">
    <property type="protein sequence ID" value="AAH97649.1"/>
    <property type="molecule type" value="mRNA"/>
</dbReference>
<dbReference type="EMBL" id="DQ861903">
    <property type="protein sequence ID" value="ABI17539.1"/>
    <property type="molecule type" value="mRNA"/>
</dbReference>
<dbReference type="RefSeq" id="NP_001089468.1">
    <property type="nucleotide sequence ID" value="NM_001095999.1"/>
</dbReference>
<dbReference type="SMR" id="Q4V7Z1"/>
<dbReference type="DNASU" id="734519"/>
<dbReference type="GeneID" id="734519"/>
<dbReference type="KEGG" id="xla:734519"/>
<dbReference type="AGR" id="Xenbase:XB-GENE-944936"/>
<dbReference type="CTD" id="734519"/>
<dbReference type="Xenbase" id="XB-GENE-944936">
    <property type="gene designation" value="poc1b.L"/>
</dbReference>
<dbReference type="OMA" id="DIHPRIP"/>
<dbReference type="OrthoDB" id="10264588at2759"/>
<dbReference type="Proteomes" id="UP000186698">
    <property type="component" value="Chromosome 3L"/>
</dbReference>
<dbReference type="Bgee" id="734519">
    <property type="expression patterns" value="Expressed in egg cell and 19 other cell types or tissues"/>
</dbReference>
<dbReference type="GO" id="GO:0005814">
    <property type="term" value="C:centriole"/>
    <property type="evidence" value="ECO:0000250"/>
    <property type="project" value="UniProtKB"/>
</dbReference>
<dbReference type="GO" id="GO:0036064">
    <property type="term" value="C:ciliary basal body"/>
    <property type="evidence" value="ECO:0000318"/>
    <property type="project" value="GO_Central"/>
</dbReference>
<dbReference type="GO" id="GO:0005737">
    <property type="term" value="C:cytoplasm"/>
    <property type="evidence" value="ECO:0007669"/>
    <property type="project" value="UniProtKB-KW"/>
</dbReference>
<dbReference type="GO" id="GO:0007099">
    <property type="term" value="P:centriole replication"/>
    <property type="evidence" value="ECO:0000250"/>
    <property type="project" value="UniProtKB"/>
</dbReference>
<dbReference type="GO" id="GO:0060271">
    <property type="term" value="P:cilium assembly"/>
    <property type="evidence" value="ECO:0000318"/>
    <property type="project" value="GO_Central"/>
</dbReference>
<dbReference type="CDD" id="cd00200">
    <property type="entry name" value="WD40"/>
    <property type="match status" value="1"/>
</dbReference>
<dbReference type="FunFam" id="2.130.10.10:FF:000235">
    <property type="entry name" value="POC1 centriolar protein homolog B"/>
    <property type="match status" value="1"/>
</dbReference>
<dbReference type="Gene3D" id="2.130.10.10">
    <property type="entry name" value="YVTN repeat-like/Quinoprotein amine dehydrogenase"/>
    <property type="match status" value="3"/>
</dbReference>
<dbReference type="InterPro" id="IPR020472">
    <property type="entry name" value="G-protein_beta_WD-40_rep"/>
</dbReference>
<dbReference type="InterPro" id="IPR015943">
    <property type="entry name" value="WD40/YVTN_repeat-like_dom_sf"/>
</dbReference>
<dbReference type="InterPro" id="IPR019775">
    <property type="entry name" value="WD40_repeat_CS"/>
</dbReference>
<dbReference type="InterPro" id="IPR036322">
    <property type="entry name" value="WD40_repeat_dom_sf"/>
</dbReference>
<dbReference type="InterPro" id="IPR001680">
    <property type="entry name" value="WD40_rpt"/>
</dbReference>
<dbReference type="InterPro" id="IPR050505">
    <property type="entry name" value="WDR55_POC1"/>
</dbReference>
<dbReference type="PANTHER" id="PTHR44019:SF1">
    <property type="entry name" value="POC1 CENTRIOLAR PROTEIN HOMOLOG B"/>
    <property type="match status" value="1"/>
</dbReference>
<dbReference type="PANTHER" id="PTHR44019">
    <property type="entry name" value="WD REPEAT-CONTAINING PROTEIN 55"/>
    <property type="match status" value="1"/>
</dbReference>
<dbReference type="Pfam" id="PF00400">
    <property type="entry name" value="WD40"/>
    <property type="match status" value="7"/>
</dbReference>
<dbReference type="PRINTS" id="PR00320">
    <property type="entry name" value="GPROTEINBRPT"/>
</dbReference>
<dbReference type="SMART" id="SM00320">
    <property type="entry name" value="WD40"/>
    <property type="match status" value="7"/>
</dbReference>
<dbReference type="SUPFAM" id="SSF50978">
    <property type="entry name" value="WD40 repeat-like"/>
    <property type="match status" value="1"/>
</dbReference>
<dbReference type="PROSITE" id="PS00678">
    <property type="entry name" value="WD_REPEATS_1"/>
    <property type="match status" value="3"/>
</dbReference>
<dbReference type="PROSITE" id="PS50082">
    <property type="entry name" value="WD_REPEATS_2"/>
    <property type="match status" value="7"/>
</dbReference>
<dbReference type="PROSITE" id="PS50294">
    <property type="entry name" value="WD_REPEATS_REGION"/>
    <property type="match status" value="1"/>
</dbReference>